<accession>B5BG29</accession>
<feature type="chain" id="PRO_0000379565" description="Putrescine aminotransferase">
    <location>
        <begin position="1"/>
        <end position="459"/>
    </location>
</feature>
<feature type="binding site" description="in other chain" evidence="1">
    <location>
        <begin position="150"/>
        <end position="151"/>
    </location>
    <ligand>
        <name>pyridoxal 5'-phosphate</name>
        <dbReference type="ChEBI" id="CHEBI:597326"/>
        <note>ligand shared between dimeric partners</note>
    </ligand>
</feature>
<feature type="binding site" description="in other chain" evidence="1">
    <location>
        <position position="274"/>
    </location>
    <ligand>
        <name>pyridoxal 5'-phosphate</name>
        <dbReference type="ChEBI" id="CHEBI:597326"/>
        <note>ligand shared between dimeric partners</note>
    </ligand>
</feature>
<feature type="binding site" evidence="1">
    <location>
        <position position="332"/>
    </location>
    <ligand>
        <name>pyridoxal 5'-phosphate</name>
        <dbReference type="ChEBI" id="CHEBI:597326"/>
        <note>ligand shared between dimeric partners</note>
    </ligand>
</feature>
<feature type="modified residue" description="N6-(pyridoxal phosphate)lysine" evidence="1">
    <location>
        <position position="300"/>
    </location>
</feature>
<protein>
    <recommendedName>
        <fullName evidence="1">Putrescine aminotransferase</fullName>
        <shortName evidence="1">PAT</shortName>
        <shortName evidence="1">PATase</shortName>
        <ecNumber evidence="1">2.6.1.82</ecNumber>
    </recommendedName>
    <alternativeName>
        <fullName evidence="1">Cadaverine transaminase</fullName>
    </alternativeName>
    <alternativeName>
        <fullName evidence="1">Diamine transaminase</fullName>
        <ecNumber evidence="1">2.6.1.29</ecNumber>
    </alternativeName>
    <alternativeName>
        <fullName evidence="1">Putrescine transaminase</fullName>
    </alternativeName>
    <alternativeName>
        <fullName evidence="1">Putrescine--2-oxoglutaric acid transaminase</fullName>
    </alternativeName>
</protein>
<reference key="1">
    <citation type="journal article" date="2009" name="BMC Genomics">
        <title>Pseudogene accumulation in the evolutionary histories of Salmonella enterica serovars Paratyphi A and Typhi.</title>
        <authorList>
            <person name="Holt K.E."/>
            <person name="Thomson N.R."/>
            <person name="Wain J."/>
            <person name="Langridge G.C."/>
            <person name="Hasan R."/>
            <person name="Bhutta Z.A."/>
            <person name="Quail M.A."/>
            <person name="Norbertczak H."/>
            <person name="Walker D."/>
            <person name="Simmonds M."/>
            <person name="White B."/>
            <person name="Bason N."/>
            <person name="Mungall K."/>
            <person name="Dougan G."/>
            <person name="Parkhill J."/>
        </authorList>
    </citation>
    <scope>NUCLEOTIDE SEQUENCE [LARGE SCALE GENOMIC DNA]</scope>
    <source>
        <strain>AKU_12601</strain>
    </source>
</reference>
<sequence length="459" mass="49739">MNRLPSSASALACSAHALNLIEKRTLNHEEMKALNREVIDYFKEHVNPGFLEYRKSVTAGGDYGAVEWQAGSLNTLVDTQGQEFIDCLGGFGIFNVGHRNPVVVSAVQNQLAKQPLHSQELLDPLRAMLAKTLAALTPGKLKYSFFCNSGTESVEAALKLAKAYQSPRGKFTFIATSGAFHGKSLGALSATAKSTFRRPFMPLLPGFRHVPFGNIDAMSMAFSEGKKTGDEIAAVILEPIQGEGGVILPPQGYLTEVRKLCDEFGALMILDEVQTGMGRTGKMFACEHENVQPDILCLAKALGGGVMPIGATIATEEVFSVLFDNPFLHTTTFGGNPLACAAALATINVLLEQNLPAQAEQKGDTLLDSFRQLAREYPNLVHEARGKGMLMAIEFVDNETGYRFASEMFRQRVLVAGTLNNAKTIRIEPPLTLTIELCEQVLKSARNALAAMQVSVEEV</sequence>
<dbReference type="EC" id="2.6.1.82" evidence="1"/>
<dbReference type="EC" id="2.6.1.29" evidence="1"/>
<dbReference type="EMBL" id="FM200053">
    <property type="protein sequence ID" value="CAR61129.1"/>
    <property type="status" value="ALT_INIT"/>
    <property type="molecule type" value="Genomic_DNA"/>
</dbReference>
<dbReference type="SMR" id="B5BG29"/>
<dbReference type="KEGG" id="sek:SSPA2882"/>
<dbReference type="HOGENOM" id="CLU_016922_10_0_6"/>
<dbReference type="UniPathway" id="UPA00188">
    <property type="reaction ID" value="UER00290"/>
</dbReference>
<dbReference type="Proteomes" id="UP000001869">
    <property type="component" value="Chromosome"/>
</dbReference>
<dbReference type="GO" id="GO:0019161">
    <property type="term" value="F:diamine transaminase activity"/>
    <property type="evidence" value="ECO:0007669"/>
    <property type="project" value="UniProtKB-EC"/>
</dbReference>
<dbReference type="GO" id="GO:0042802">
    <property type="term" value="F:identical protein binding"/>
    <property type="evidence" value="ECO:0007669"/>
    <property type="project" value="TreeGrafter"/>
</dbReference>
<dbReference type="GO" id="GO:0033094">
    <property type="term" value="F:putrescine--2-oxoglutarate transaminase activity"/>
    <property type="evidence" value="ECO:0007669"/>
    <property type="project" value="UniProtKB-UniRule"/>
</dbReference>
<dbReference type="GO" id="GO:0030170">
    <property type="term" value="F:pyridoxal phosphate binding"/>
    <property type="evidence" value="ECO:0007669"/>
    <property type="project" value="UniProtKB-UniRule"/>
</dbReference>
<dbReference type="GO" id="GO:0019477">
    <property type="term" value="P:L-lysine catabolic process"/>
    <property type="evidence" value="ECO:0007669"/>
    <property type="project" value="UniProtKB-UniRule"/>
</dbReference>
<dbReference type="GO" id="GO:0009447">
    <property type="term" value="P:putrescine catabolic process"/>
    <property type="evidence" value="ECO:0007669"/>
    <property type="project" value="UniProtKB-UniRule"/>
</dbReference>
<dbReference type="CDD" id="cd00610">
    <property type="entry name" value="OAT_like"/>
    <property type="match status" value="1"/>
</dbReference>
<dbReference type="FunFam" id="3.40.640.10:FF:000004">
    <property type="entry name" value="Acetylornithine aminotransferase"/>
    <property type="match status" value="1"/>
</dbReference>
<dbReference type="Gene3D" id="3.90.1150.10">
    <property type="entry name" value="Aspartate Aminotransferase, domain 1"/>
    <property type="match status" value="1"/>
</dbReference>
<dbReference type="Gene3D" id="3.40.640.10">
    <property type="entry name" value="Type I PLP-dependent aspartate aminotransferase-like (Major domain)"/>
    <property type="match status" value="1"/>
</dbReference>
<dbReference type="HAMAP" id="MF_01276">
    <property type="entry name" value="Putres_aminotrans_3"/>
    <property type="match status" value="1"/>
</dbReference>
<dbReference type="InterPro" id="IPR005814">
    <property type="entry name" value="Aminotrans_3"/>
</dbReference>
<dbReference type="InterPro" id="IPR049704">
    <property type="entry name" value="Aminotrans_3_PPA_site"/>
</dbReference>
<dbReference type="InterPro" id="IPR050103">
    <property type="entry name" value="Class-III_PLP-dep_AT"/>
</dbReference>
<dbReference type="InterPro" id="IPR017747">
    <property type="entry name" value="Putrescine_aminotransferase"/>
</dbReference>
<dbReference type="InterPro" id="IPR015424">
    <property type="entry name" value="PyrdxlP-dep_Trfase"/>
</dbReference>
<dbReference type="InterPro" id="IPR015421">
    <property type="entry name" value="PyrdxlP-dep_Trfase_major"/>
</dbReference>
<dbReference type="InterPro" id="IPR015422">
    <property type="entry name" value="PyrdxlP-dep_Trfase_small"/>
</dbReference>
<dbReference type="NCBIfam" id="NF008570">
    <property type="entry name" value="PRK11522.1"/>
    <property type="match status" value="1"/>
</dbReference>
<dbReference type="NCBIfam" id="TIGR03372">
    <property type="entry name" value="putres_am_tran"/>
    <property type="match status" value="1"/>
</dbReference>
<dbReference type="PANTHER" id="PTHR11986">
    <property type="entry name" value="AMINOTRANSFERASE CLASS III"/>
    <property type="match status" value="1"/>
</dbReference>
<dbReference type="PANTHER" id="PTHR11986:SF112">
    <property type="entry name" value="PUTRESCINE AMINOTRANSFERASE"/>
    <property type="match status" value="1"/>
</dbReference>
<dbReference type="Pfam" id="PF00202">
    <property type="entry name" value="Aminotran_3"/>
    <property type="match status" value="1"/>
</dbReference>
<dbReference type="PIRSF" id="PIRSF000521">
    <property type="entry name" value="Transaminase_4ab_Lys_Orn"/>
    <property type="match status" value="1"/>
</dbReference>
<dbReference type="SUPFAM" id="SSF53383">
    <property type="entry name" value="PLP-dependent transferases"/>
    <property type="match status" value="1"/>
</dbReference>
<dbReference type="PROSITE" id="PS00600">
    <property type="entry name" value="AA_TRANSFER_CLASS_3"/>
    <property type="match status" value="1"/>
</dbReference>
<name>PAT_SALPK</name>
<evidence type="ECO:0000255" key="1">
    <source>
        <dbReference type="HAMAP-Rule" id="MF_01276"/>
    </source>
</evidence>
<evidence type="ECO:0000305" key="2"/>
<comment type="function">
    <text evidence="1">Catalyzes the aminotransferase reaction from putrescine to 2-oxoglutarate, leading to glutamate and 4-aminobutanal, which spontaneously cyclizes to form 1-pyrroline. This is the first step in one of two pathways for putrescine degradation, where putrescine is converted into 4-aminobutanoate (gamma-aminobutyrate or GABA) via 4-aminobutanal. Also functions as a cadaverine transaminase in a a L-lysine degradation pathway to succinate that proceeds via cadaverine, glutarate and L-2-hydroxyglutarate.</text>
</comment>
<comment type="catalytic activity">
    <reaction evidence="1">
        <text>an alkane-alpha,omega-diamine + 2-oxoglutarate = an omega-aminoaldehyde + L-glutamate</text>
        <dbReference type="Rhea" id="RHEA:18217"/>
        <dbReference type="Rhea" id="RHEA-COMP:9766"/>
        <dbReference type="Rhea" id="RHEA-COMP:12750"/>
        <dbReference type="ChEBI" id="CHEBI:16810"/>
        <dbReference type="ChEBI" id="CHEBI:29985"/>
        <dbReference type="ChEBI" id="CHEBI:70977"/>
        <dbReference type="ChEBI" id="CHEBI:133427"/>
        <dbReference type="EC" id="2.6.1.29"/>
    </reaction>
    <physiologicalReaction direction="left-to-right" evidence="1">
        <dbReference type="Rhea" id="RHEA:18218"/>
    </physiologicalReaction>
</comment>
<comment type="catalytic activity">
    <reaction evidence="1">
        <text>putrescine + 2-oxoglutarate = 1-pyrroline + L-glutamate + H2O</text>
        <dbReference type="Rhea" id="RHEA:12268"/>
        <dbReference type="ChEBI" id="CHEBI:15377"/>
        <dbReference type="ChEBI" id="CHEBI:16810"/>
        <dbReference type="ChEBI" id="CHEBI:29985"/>
        <dbReference type="ChEBI" id="CHEBI:36781"/>
        <dbReference type="ChEBI" id="CHEBI:326268"/>
        <dbReference type="EC" id="2.6.1.82"/>
    </reaction>
    <physiologicalReaction direction="left-to-right" evidence="1">
        <dbReference type="Rhea" id="RHEA:12269"/>
    </physiologicalReaction>
</comment>
<comment type="catalytic activity">
    <reaction evidence="1">
        <text>cadaverine + 2-oxoglutarate = 5-aminopentanal + L-glutamate</text>
        <dbReference type="Rhea" id="RHEA:61624"/>
        <dbReference type="ChEBI" id="CHEBI:16810"/>
        <dbReference type="ChEBI" id="CHEBI:29985"/>
        <dbReference type="ChEBI" id="CHEBI:58384"/>
        <dbReference type="ChEBI" id="CHEBI:144896"/>
    </reaction>
    <physiologicalReaction direction="left-to-right" evidence="1">
        <dbReference type="Rhea" id="RHEA:61625"/>
    </physiologicalReaction>
</comment>
<comment type="cofactor">
    <cofactor evidence="1">
        <name>pyridoxal 5'-phosphate</name>
        <dbReference type="ChEBI" id="CHEBI:597326"/>
    </cofactor>
</comment>
<comment type="pathway">
    <text evidence="1">Amine and polyamine degradation; putrescine degradation; 4-aminobutanal from putrescine (transaminase route): step 1/1.</text>
</comment>
<comment type="similarity">
    <text evidence="1">Belongs to the class-III pyridoxal-phosphate-dependent aminotransferase family. Putrescine aminotransferase subfamily.</text>
</comment>
<comment type="sequence caution" evidence="2">
    <conflict type="erroneous initiation">
        <sequence resource="EMBL-CDS" id="CAR61129"/>
    </conflict>
</comment>
<gene>
    <name evidence="1" type="primary">patA</name>
    <name type="ordered locus">SSPA2882</name>
</gene>
<proteinExistence type="inferred from homology"/>
<keyword id="KW-0032">Aminotransferase</keyword>
<keyword id="KW-0663">Pyridoxal phosphate</keyword>
<keyword id="KW-0808">Transferase</keyword>
<organism>
    <name type="scientific">Salmonella paratyphi A (strain AKU_12601)</name>
    <dbReference type="NCBI Taxonomy" id="554290"/>
    <lineage>
        <taxon>Bacteria</taxon>
        <taxon>Pseudomonadati</taxon>
        <taxon>Pseudomonadota</taxon>
        <taxon>Gammaproteobacteria</taxon>
        <taxon>Enterobacterales</taxon>
        <taxon>Enterobacteriaceae</taxon>
        <taxon>Salmonella</taxon>
    </lineage>
</organism>